<evidence type="ECO:0000255" key="1">
    <source>
        <dbReference type="HAMAP-Rule" id="MF_00636"/>
    </source>
</evidence>
<keyword id="KW-0067">ATP-binding</keyword>
<keyword id="KW-0342">GTP-binding</keyword>
<keyword id="KW-0547">Nucleotide-binding</keyword>
<keyword id="KW-1185">Reference proteome</keyword>
<gene>
    <name type="ordered locus">CJA_2809</name>
</gene>
<comment type="function">
    <text evidence="1">Displays ATPase and GTPase activities.</text>
</comment>
<comment type="similarity">
    <text evidence="1">Belongs to the RapZ-like family.</text>
</comment>
<accession>B3PBZ8</accession>
<proteinExistence type="inferred from homology"/>
<reference key="1">
    <citation type="journal article" date="2008" name="J. Bacteriol.">
        <title>Insights into plant cell wall degradation from the genome sequence of the soil bacterium Cellvibrio japonicus.</title>
        <authorList>
            <person name="DeBoy R.T."/>
            <person name="Mongodin E.F."/>
            <person name="Fouts D.E."/>
            <person name="Tailford L.E."/>
            <person name="Khouri H."/>
            <person name="Emerson J.B."/>
            <person name="Mohamoud Y."/>
            <person name="Watkins K."/>
            <person name="Henrissat B."/>
            <person name="Gilbert H.J."/>
            <person name="Nelson K.E."/>
        </authorList>
    </citation>
    <scope>NUCLEOTIDE SEQUENCE [LARGE SCALE GENOMIC DNA]</scope>
    <source>
        <strain>Ueda107</strain>
    </source>
</reference>
<feature type="chain" id="PRO_1000130740" description="Nucleotide-binding protein CJA_2809">
    <location>
        <begin position="1"/>
        <end position="297"/>
    </location>
</feature>
<feature type="binding site" evidence="1">
    <location>
        <begin position="8"/>
        <end position="15"/>
    </location>
    <ligand>
        <name>ATP</name>
        <dbReference type="ChEBI" id="CHEBI:30616"/>
    </ligand>
</feature>
<feature type="binding site" evidence="1">
    <location>
        <begin position="59"/>
        <end position="62"/>
    </location>
    <ligand>
        <name>GTP</name>
        <dbReference type="ChEBI" id="CHEBI:37565"/>
    </ligand>
</feature>
<protein>
    <recommendedName>
        <fullName evidence="1">Nucleotide-binding protein CJA_2809</fullName>
    </recommendedName>
</protein>
<organism>
    <name type="scientific">Cellvibrio japonicus (strain Ueda107)</name>
    <name type="common">Pseudomonas fluorescens subsp. cellulosa</name>
    <dbReference type="NCBI Taxonomy" id="498211"/>
    <lineage>
        <taxon>Bacteria</taxon>
        <taxon>Pseudomonadati</taxon>
        <taxon>Pseudomonadota</taxon>
        <taxon>Gammaproteobacteria</taxon>
        <taxon>Cellvibrionales</taxon>
        <taxon>Cellvibrionaceae</taxon>
        <taxon>Cellvibrio</taxon>
    </lineage>
</organism>
<name>Y2809_CELJU</name>
<sequence>MHLVIVSGLSGSGKTTALHVLEDVGFNCIDNLPVSLLPALVAQIEIHKDQAQKFAIGIDVRNAWQDLSLFPKMVSTLKEAHLPFHTIYLDSHPSVLIQRFSETRRKHPLSDKSTSLEEAIALEQNLLEPIRDAADQTIDTSHLNLHELRDLVKDRVVGRTEATMAILFESFGFKHGTPVNADLVFDARCLPNPHWKPHLRPQTGLDADVVEFLEEQVTVQEMYADIEHYLTRWLPRYQANNRSYITIAIGCTGGQHRSVYLSERLKKHFDQYYQDVQVRHRDIHKHQKHHNHAPANS</sequence>
<dbReference type="EMBL" id="CP000934">
    <property type="protein sequence ID" value="ACE83321.1"/>
    <property type="molecule type" value="Genomic_DNA"/>
</dbReference>
<dbReference type="RefSeq" id="WP_012488403.1">
    <property type="nucleotide sequence ID" value="NC_010995.1"/>
</dbReference>
<dbReference type="SMR" id="B3PBZ8"/>
<dbReference type="STRING" id="498211.CJA_2809"/>
<dbReference type="KEGG" id="cja:CJA_2809"/>
<dbReference type="eggNOG" id="COG1660">
    <property type="taxonomic scope" value="Bacteria"/>
</dbReference>
<dbReference type="HOGENOM" id="CLU_059558_1_1_6"/>
<dbReference type="OrthoDB" id="9784461at2"/>
<dbReference type="Proteomes" id="UP000001036">
    <property type="component" value="Chromosome"/>
</dbReference>
<dbReference type="GO" id="GO:0005524">
    <property type="term" value="F:ATP binding"/>
    <property type="evidence" value="ECO:0007669"/>
    <property type="project" value="UniProtKB-UniRule"/>
</dbReference>
<dbReference type="GO" id="GO:0005525">
    <property type="term" value="F:GTP binding"/>
    <property type="evidence" value="ECO:0007669"/>
    <property type="project" value="UniProtKB-UniRule"/>
</dbReference>
<dbReference type="Gene3D" id="3.40.50.300">
    <property type="entry name" value="P-loop containing nucleotide triphosphate hydrolases"/>
    <property type="match status" value="1"/>
</dbReference>
<dbReference type="HAMAP" id="MF_00636">
    <property type="entry name" value="RapZ_like"/>
    <property type="match status" value="1"/>
</dbReference>
<dbReference type="InterPro" id="IPR027417">
    <property type="entry name" value="P-loop_NTPase"/>
</dbReference>
<dbReference type="InterPro" id="IPR005337">
    <property type="entry name" value="RapZ-like"/>
</dbReference>
<dbReference type="InterPro" id="IPR053930">
    <property type="entry name" value="RapZ-like_N"/>
</dbReference>
<dbReference type="InterPro" id="IPR053931">
    <property type="entry name" value="RapZ_C"/>
</dbReference>
<dbReference type="NCBIfam" id="NF003828">
    <property type="entry name" value="PRK05416.1"/>
    <property type="match status" value="1"/>
</dbReference>
<dbReference type="PANTHER" id="PTHR30448">
    <property type="entry name" value="RNASE ADAPTER PROTEIN RAPZ"/>
    <property type="match status" value="1"/>
</dbReference>
<dbReference type="PANTHER" id="PTHR30448:SF0">
    <property type="entry name" value="RNASE ADAPTER PROTEIN RAPZ"/>
    <property type="match status" value="1"/>
</dbReference>
<dbReference type="Pfam" id="PF22740">
    <property type="entry name" value="PapZ_C"/>
    <property type="match status" value="1"/>
</dbReference>
<dbReference type="Pfam" id="PF03668">
    <property type="entry name" value="RapZ-like_N"/>
    <property type="match status" value="1"/>
</dbReference>
<dbReference type="PIRSF" id="PIRSF005052">
    <property type="entry name" value="P-loopkin"/>
    <property type="match status" value="1"/>
</dbReference>
<dbReference type="SUPFAM" id="SSF52540">
    <property type="entry name" value="P-loop containing nucleoside triphosphate hydrolases"/>
    <property type="match status" value="1"/>
</dbReference>